<gene>
    <name evidence="1" type="primary">serS</name>
    <name type="ordered locus">Csac_1456</name>
</gene>
<reference key="1">
    <citation type="submission" date="2007-04" db="EMBL/GenBank/DDBJ databases">
        <title>Genome sequence of the thermophilic hydrogen-producing bacterium Caldicellulosiruptor saccharolyticus DSM 8903.</title>
        <authorList>
            <person name="Copeland A."/>
            <person name="Lucas S."/>
            <person name="Lapidus A."/>
            <person name="Barry K."/>
            <person name="Detter J.C."/>
            <person name="Glavina del Rio T."/>
            <person name="Hammon N."/>
            <person name="Israni S."/>
            <person name="Dalin E."/>
            <person name="Tice H."/>
            <person name="Pitluck S."/>
            <person name="Kiss H."/>
            <person name="Brettin T."/>
            <person name="Bruce D."/>
            <person name="Han C."/>
            <person name="Schmutz J."/>
            <person name="Larimer F."/>
            <person name="Land M."/>
            <person name="Hauser L."/>
            <person name="Kyrpides N."/>
            <person name="Lykidis A."/>
            <person name="van de Werken H.J.G."/>
            <person name="Verhaart M.R.A."/>
            <person name="VanFossen A.L."/>
            <person name="Lewis D.L."/>
            <person name="Nichols J.D."/>
            <person name="Goorissen H.P."/>
            <person name="van Niel E.W.J."/>
            <person name="Stams F.J.M."/>
            <person name="Willquist K.U."/>
            <person name="Ward D.E."/>
            <person name="van der Oost J."/>
            <person name="Kelly R.M."/>
            <person name="Kengen S.M.W."/>
            <person name="Richardson P."/>
        </authorList>
    </citation>
    <scope>NUCLEOTIDE SEQUENCE [LARGE SCALE GENOMIC DNA]</scope>
    <source>
        <strain>ATCC 43494 / DSM 8903 / Tp8T 6331</strain>
    </source>
</reference>
<sequence length="420" mass="48123">MLDLKFIRSNPEKVQEGLNKRNKDISIAPILELDEKRRKLLAEVEKMKAIQNQKSKEIPKLKKEGKDTTELMNELKELSDKIKELDSQVKEVEDEIEKILLTIPNIPHESVPIGKDDTENVEVRRWGEPRVPDFEIKPHWEIGEKLGILDFERASKVSGSRFTFYRGLGARLERALINFMLDLHIEKHGYVELFPPFLVARKSMIGTGQLPKFEEDAFKTTDDYFLIPTAEVPVTNYHREEILKEEDLPIKYVAYSACFRAEAGAAGKDTRGLIRQHQFNKVELVKFAKPEDSYDELEKLTADAEDVLKHLGLPYRVVLLCSGDLGFSSAKTYDIEVWMPSYGRYVEISSCSNFESFQARRANIRFRRKDGKLDFVHTLNGSGLAVGRTVAAILENFQQKDGSVVVPEVLRKYMGTDIIK</sequence>
<protein>
    <recommendedName>
        <fullName evidence="1">Serine--tRNA ligase</fullName>
        <ecNumber evidence="1">6.1.1.11</ecNumber>
    </recommendedName>
    <alternativeName>
        <fullName evidence="1">Seryl-tRNA synthetase</fullName>
        <shortName evidence="1">SerRS</shortName>
    </alternativeName>
    <alternativeName>
        <fullName evidence="1">Seryl-tRNA(Ser/Sec) synthetase</fullName>
    </alternativeName>
</protein>
<organism>
    <name type="scientific">Caldicellulosiruptor saccharolyticus (strain ATCC 43494 / DSM 8903 / Tp8T 6331)</name>
    <dbReference type="NCBI Taxonomy" id="351627"/>
    <lineage>
        <taxon>Bacteria</taxon>
        <taxon>Bacillati</taxon>
        <taxon>Bacillota</taxon>
        <taxon>Bacillota incertae sedis</taxon>
        <taxon>Caldicellulosiruptorales</taxon>
        <taxon>Caldicellulosiruptoraceae</taxon>
        <taxon>Caldicellulosiruptor</taxon>
    </lineage>
</organism>
<comment type="function">
    <text evidence="1">Catalyzes the attachment of serine to tRNA(Ser). Is also able to aminoacylate tRNA(Sec) with serine, to form the misacylated tRNA L-seryl-tRNA(Sec), which will be further converted into selenocysteinyl-tRNA(Sec).</text>
</comment>
<comment type="catalytic activity">
    <reaction evidence="1">
        <text>tRNA(Ser) + L-serine + ATP = L-seryl-tRNA(Ser) + AMP + diphosphate + H(+)</text>
        <dbReference type="Rhea" id="RHEA:12292"/>
        <dbReference type="Rhea" id="RHEA-COMP:9669"/>
        <dbReference type="Rhea" id="RHEA-COMP:9703"/>
        <dbReference type="ChEBI" id="CHEBI:15378"/>
        <dbReference type="ChEBI" id="CHEBI:30616"/>
        <dbReference type="ChEBI" id="CHEBI:33019"/>
        <dbReference type="ChEBI" id="CHEBI:33384"/>
        <dbReference type="ChEBI" id="CHEBI:78442"/>
        <dbReference type="ChEBI" id="CHEBI:78533"/>
        <dbReference type="ChEBI" id="CHEBI:456215"/>
        <dbReference type="EC" id="6.1.1.11"/>
    </reaction>
</comment>
<comment type="catalytic activity">
    <reaction evidence="1">
        <text>tRNA(Sec) + L-serine + ATP = L-seryl-tRNA(Sec) + AMP + diphosphate + H(+)</text>
        <dbReference type="Rhea" id="RHEA:42580"/>
        <dbReference type="Rhea" id="RHEA-COMP:9742"/>
        <dbReference type="Rhea" id="RHEA-COMP:10128"/>
        <dbReference type="ChEBI" id="CHEBI:15378"/>
        <dbReference type="ChEBI" id="CHEBI:30616"/>
        <dbReference type="ChEBI" id="CHEBI:33019"/>
        <dbReference type="ChEBI" id="CHEBI:33384"/>
        <dbReference type="ChEBI" id="CHEBI:78442"/>
        <dbReference type="ChEBI" id="CHEBI:78533"/>
        <dbReference type="ChEBI" id="CHEBI:456215"/>
        <dbReference type="EC" id="6.1.1.11"/>
    </reaction>
</comment>
<comment type="pathway">
    <text evidence="1">Aminoacyl-tRNA biosynthesis; selenocysteinyl-tRNA(Sec) biosynthesis; L-seryl-tRNA(Sec) from L-serine and tRNA(Sec): step 1/1.</text>
</comment>
<comment type="subunit">
    <text evidence="1">Homodimer. The tRNA molecule binds across the dimer.</text>
</comment>
<comment type="subcellular location">
    <subcellularLocation>
        <location evidence="1">Cytoplasm</location>
    </subcellularLocation>
</comment>
<comment type="domain">
    <text evidence="1">Consists of two distinct domains, a catalytic core and a N-terminal extension that is involved in tRNA binding.</text>
</comment>
<comment type="similarity">
    <text evidence="1">Belongs to the class-II aminoacyl-tRNA synthetase family. Type-1 seryl-tRNA synthetase subfamily.</text>
</comment>
<proteinExistence type="inferred from homology"/>
<keyword id="KW-0030">Aminoacyl-tRNA synthetase</keyword>
<keyword id="KW-0067">ATP-binding</keyword>
<keyword id="KW-0963">Cytoplasm</keyword>
<keyword id="KW-0436">Ligase</keyword>
<keyword id="KW-0547">Nucleotide-binding</keyword>
<keyword id="KW-0648">Protein biosynthesis</keyword>
<evidence type="ECO:0000255" key="1">
    <source>
        <dbReference type="HAMAP-Rule" id="MF_00176"/>
    </source>
</evidence>
<name>SYS_CALS8</name>
<feature type="chain" id="PRO_1000019639" description="Serine--tRNA ligase">
    <location>
        <begin position="1"/>
        <end position="420"/>
    </location>
</feature>
<feature type="binding site" evidence="1">
    <location>
        <begin position="229"/>
        <end position="231"/>
    </location>
    <ligand>
        <name>L-serine</name>
        <dbReference type="ChEBI" id="CHEBI:33384"/>
    </ligand>
</feature>
<feature type="binding site" evidence="1">
    <location>
        <begin position="260"/>
        <end position="262"/>
    </location>
    <ligand>
        <name>ATP</name>
        <dbReference type="ChEBI" id="CHEBI:30616"/>
    </ligand>
</feature>
<feature type="binding site" evidence="1">
    <location>
        <position position="283"/>
    </location>
    <ligand>
        <name>L-serine</name>
        <dbReference type="ChEBI" id="CHEBI:33384"/>
    </ligand>
</feature>
<feature type="binding site" evidence="1">
    <location>
        <begin position="347"/>
        <end position="350"/>
    </location>
    <ligand>
        <name>ATP</name>
        <dbReference type="ChEBI" id="CHEBI:30616"/>
    </ligand>
</feature>
<feature type="binding site" evidence="1">
    <location>
        <position position="382"/>
    </location>
    <ligand>
        <name>L-serine</name>
        <dbReference type="ChEBI" id="CHEBI:33384"/>
    </ligand>
</feature>
<accession>A4XJH1</accession>
<dbReference type="EC" id="6.1.1.11" evidence="1"/>
<dbReference type="EMBL" id="CP000679">
    <property type="protein sequence ID" value="ABP67056.1"/>
    <property type="molecule type" value="Genomic_DNA"/>
</dbReference>
<dbReference type="RefSeq" id="WP_011916992.1">
    <property type="nucleotide sequence ID" value="NC_009437.1"/>
</dbReference>
<dbReference type="SMR" id="A4XJH1"/>
<dbReference type="STRING" id="351627.Csac_1456"/>
<dbReference type="KEGG" id="csc:Csac_1456"/>
<dbReference type="eggNOG" id="COG0172">
    <property type="taxonomic scope" value="Bacteria"/>
</dbReference>
<dbReference type="HOGENOM" id="CLU_023797_1_1_9"/>
<dbReference type="OrthoDB" id="9804647at2"/>
<dbReference type="UniPathway" id="UPA00906">
    <property type="reaction ID" value="UER00895"/>
</dbReference>
<dbReference type="Proteomes" id="UP000000256">
    <property type="component" value="Chromosome"/>
</dbReference>
<dbReference type="GO" id="GO:0005737">
    <property type="term" value="C:cytoplasm"/>
    <property type="evidence" value="ECO:0007669"/>
    <property type="project" value="UniProtKB-SubCell"/>
</dbReference>
<dbReference type="GO" id="GO:0005524">
    <property type="term" value="F:ATP binding"/>
    <property type="evidence" value="ECO:0007669"/>
    <property type="project" value="UniProtKB-UniRule"/>
</dbReference>
<dbReference type="GO" id="GO:0140096">
    <property type="term" value="F:catalytic activity, acting on a protein"/>
    <property type="evidence" value="ECO:0007669"/>
    <property type="project" value="UniProtKB-ARBA"/>
</dbReference>
<dbReference type="GO" id="GO:0004828">
    <property type="term" value="F:serine-tRNA ligase activity"/>
    <property type="evidence" value="ECO:0007669"/>
    <property type="project" value="UniProtKB-UniRule"/>
</dbReference>
<dbReference type="GO" id="GO:0016740">
    <property type="term" value="F:transferase activity"/>
    <property type="evidence" value="ECO:0007669"/>
    <property type="project" value="UniProtKB-ARBA"/>
</dbReference>
<dbReference type="GO" id="GO:0016260">
    <property type="term" value="P:selenocysteine biosynthetic process"/>
    <property type="evidence" value="ECO:0007669"/>
    <property type="project" value="UniProtKB-UniRule"/>
</dbReference>
<dbReference type="GO" id="GO:0006434">
    <property type="term" value="P:seryl-tRNA aminoacylation"/>
    <property type="evidence" value="ECO:0007669"/>
    <property type="project" value="UniProtKB-UniRule"/>
</dbReference>
<dbReference type="CDD" id="cd00770">
    <property type="entry name" value="SerRS_core"/>
    <property type="match status" value="1"/>
</dbReference>
<dbReference type="Gene3D" id="3.30.930.10">
    <property type="entry name" value="Bira Bifunctional Protein, Domain 2"/>
    <property type="match status" value="1"/>
</dbReference>
<dbReference type="Gene3D" id="1.10.287.40">
    <property type="entry name" value="Serine-tRNA synthetase, tRNA binding domain"/>
    <property type="match status" value="1"/>
</dbReference>
<dbReference type="HAMAP" id="MF_00176">
    <property type="entry name" value="Ser_tRNA_synth_type1"/>
    <property type="match status" value="1"/>
</dbReference>
<dbReference type="InterPro" id="IPR002314">
    <property type="entry name" value="aa-tRNA-synt_IIb"/>
</dbReference>
<dbReference type="InterPro" id="IPR006195">
    <property type="entry name" value="aa-tRNA-synth_II"/>
</dbReference>
<dbReference type="InterPro" id="IPR045864">
    <property type="entry name" value="aa-tRNA-synth_II/BPL/LPL"/>
</dbReference>
<dbReference type="InterPro" id="IPR002317">
    <property type="entry name" value="Ser-tRNA-ligase_type_1"/>
</dbReference>
<dbReference type="InterPro" id="IPR015866">
    <property type="entry name" value="Ser-tRNA-synth_1_N"/>
</dbReference>
<dbReference type="InterPro" id="IPR042103">
    <property type="entry name" value="SerRS_1_N_sf"/>
</dbReference>
<dbReference type="InterPro" id="IPR033729">
    <property type="entry name" value="SerRS_core"/>
</dbReference>
<dbReference type="InterPro" id="IPR010978">
    <property type="entry name" value="tRNA-bd_arm"/>
</dbReference>
<dbReference type="NCBIfam" id="TIGR00414">
    <property type="entry name" value="serS"/>
    <property type="match status" value="1"/>
</dbReference>
<dbReference type="PANTHER" id="PTHR43697:SF1">
    <property type="entry name" value="SERINE--TRNA LIGASE"/>
    <property type="match status" value="1"/>
</dbReference>
<dbReference type="PANTHER" id="PTHR43697">
    <property type="entry name" value="SERYL-TRNA SYNTHETASE"/>
    <property type="match status" value="1"/>
</dbReference>
<dbReference type="Pfam" id="PF02403">
    <property type="entry name" value="Seryl_tRNA_N"/>
    <property type="match status" value="1"/>
</dbReference>
<dbReference type="Pfam" id="PF00587">
    <property type="entry name" value="tRNA-synt_2b"/>
    <property type="match status" value="1"/>
</dbReference>
<dbReference type="PIRSF" id="PIRSF001529">
    <property type="entry name" value="Ser-tRNA-synth_IIa"/>
    <property type="match status" value="1"/>
</dbReference>
<dbReference type="PRINTS" id="PR00981">
    <property type="entry name" value="TRNASYNTHSER"/>
</dbReference>
<dbReference type="SUPFAM" id="SSF55681">
    <property type="entry name" value="Class II aaRS and biotin synthetases"/>
    <property type="match status" value="1"/>
</dbReference>
<dbReference type="SUPFAM" id="SSF46589">
    <property type="entry name" value="tRNA-binding arm"/>
    <property type="match status" value="1"/>
</dbReference>
<dbReference type="PROSITE" id="PS50862">
    <property type="entry name" value="AA_TRNA_LIGASE_II"/>
    <property type="match status" value="1"/>
</dbReference>